<organism>
    <name type="scientific">Escherichia coli (strain K12 / MC4100 / BW2952)</name>
    <dbReference type="NCBI Taxonomy" id="595496"/>
    <lineage>
        <taxon>Bacteria</taxon>
        <taxon>Pseudomonadati</taxon>
        <taxon>Pseudomonadota</taxon>
        <taxon>Gammaproteobacteria</taxon>
        <taxon>Enterobacterales</taxon>
        <taxon>Enterobacteriaceae</taxon>
        <taxon>Escherichia</taxon>
    </lineage>
</organism>
<feature type="chain" id="PRO_1000213033" description="ATP synthase gamma chain">
    <location>
        <begin position="1"/>
        <end position="287"/>
    </location>
</feature>
<reference key="1">
    <citation type="journal article" date="2009" name="J. Bacteriol.">
        <title>Genomic sequencing reveals regulatory mutations and recombinational events in the widely used MC4100 lineage of Escherichia coli K-12.</title>
        <authorList>
            <person name="Ferenci T."/>
            <person name="Zhou Z."/>
            <person name="Betteridge T."/>
            <person name="Ren Y."/>
            <person name="Liu Y."/>
            <person name="Feng L."/>
            <person name="Reeves P.R."/>
            <person name="Wang L."/>
        </authorList>
    </citation>
    <scope>NUCLEOTIDE SEQUENCE [LARGE SCALE GENOMIC DNA]</scope>
    <source>
        <strain>K12 / MC4100 / BW2952</strain>
    </source>
</reference>
<gene>
    <name evidence="1" type="primary">atpG</name>
    <name type="ordered locus">BWG_3424</name>
</gene>
<keyword id="KW-0066">ATP synthesis</keyword>
<keyword id="KW-0997">Cell inner membrane</keyword>
<keyword id="KW-1003">Cell membrane</keyword>
<keyword id="KW-0139">CF(1)</keyword>
<keyword id="KW-0375">Hydrogen ion transport</keyword>
<keyword id="KW-0406">Ion transport</keyword>
<keyword id="KW-0472">Membrane</keyword>
<keyword id="KW-0813">Transport</keyword>
<protein>
    <recommendedName>
        <fullName evidence="1">ATP synthase gamma chain</fullName>
    </recommendedName>
    <alternativeName>
        <fullName evidence="1">ATP synthase F1 sector gamma subunit</fullName>
    </alternativeName>
    <alternativeName>
        <fullName evidence="1">F-ATPase gamma subunit</fullName>
    </alternativeName>
</protein>
<accession>C4ZZ11</accession>
<name>ATPG_ECOBW</name>
<sequence length="287" mass="31577">MAGAKEIRSKIASVQNTQKITKAMEMVAASKMRKSQDRMAASRPYAETMRKVIGHLAHGNLEYKHPYLEDRDVKRVGYLVVSTDRGLCGGLNINLFKKLLAEMKTWTDKGVQCDLAMIGSKGVSFFNSVGGNVVAQVTGMGDNPSLSELIGPVKVMLQAYDEGRLDKLYIVSNKFINTMSQVPTISQLLPLPASDDDDLKHKSWDYLYEPDPKALLDTLLRRYVESQVYQGVVENLASEQAARMVAMKAATDNGGSLIKELQLVYNKARQASITQELTEIVSGAAAV</sequence>
<evidence type="ECO:0000255" key="1">
    <source>
        <dbReference type="HAMAP-Rule" id="MF_00815"/>
    </source>
</evidence>
<comment type="function">
    <text evidence="1">Produces ATP from ADP in the presence of a proton gradient across the membrane. The gamma chain is believed to be important in regulating ATPase activity and the flow of protons through the CF(0) complex.</text>
</comment>
<comment type="subunit">
    <text evidence="1">F-type ATPases have 2 components, CF(1) - the catalytic core - and CF(0) - the membrane proton channel. CF(1) has five subunits: alpha(3), beta(3), gamma(1), delta(1), epsilon(1). CF(0) has three main subunits: a, b and c.</text>
</comment>
<comment type="subcellular location">
    <subcellularLocation>
        <location evidence="1">Cell inner membrane</location>
        <topology evidence="1">Peripheral membrane protein</topology>
    </subcellularLocation>
</comment>
<comment type="similarity">
    <text evidence="1">Belongs to the ATPase gamma chain family.</text>
</comment>
<proteinExistence type="inferred from homology"/>
<dbReference type="EMBL" id="CP001396">
    <property type="protein sequence ID" value="ACR63069.1"/>
    <property type="molecule type" value="Genomic_DNA"/>
</dbReference>
<dbReference type="RefSeq" id="WP_000896498.1">
    <property type="nucleotide sequence ID" value="NC_012759.1"/>
</dbReference>
<dbReference type="SMR" id="C4ZZ11"/>
<dbReference type="GeneID" id="93778234"/>
<dbReference type="KEGG" id="ebw:BWG_3424"/>
<dbReference type="HOGENOM" id="CLU_050669_0_1_6"/>
<dbReference type="GO" id="GO:0005886">
    <property type="term" value="C:plasma membrane"/>
    <property type="evidence" value="ECO:0007669"/>
    <property type="project" value="UniProtKB-SubCell"/>
</dbReference>
<dbReference type="GO" id="GO:0045259">
    <property type="term" value="C:proton-transporting ATP synthase complex"/>
    <property type="evidence" value="ECO:0007669"/>
    <property type="project" value="UniProtKB-KW"/>
</dbReference>
<dbReference type="GO" id="GO:0005524">
    <property type="term" value="F:ATP binding"/>
    <property type="evidence" value="ECO:0007669"/>
    <property type="project" value="UniProtKB-UniRule"/>
</dbReference>
<dbReference type="GO" id="GO:0046933">
    <property type="term" value="F:proton-transporting ATP synthase activity, rotational mechanism"/>
    <property type="evidence" value="ECO:0007669"/>
    <property type="project" value="UniProtKB-UniRule"/>
</dbReference>
<dbReference type="GO" id="GO:0042777">
    <property type="term" value="P:proton motive force-driven plasma membrane ATP synthesis"/>
    <property type="evidence" value="ECO:0007669"/>
    <property type="project" value="UniProtKB-UniRule"/>
</dbReference>
<dbReference type="CDD" id="cd12151">
    <property type="entry name" value="F1-ATPase_gamma"/>
    <property type="match status" value="1"/>
</dbReference>
<dbReference type="FunFam" id="1.10.287.80:FF:000005">
    <property type="entry name" value="ATP synthase gamma chain"/>
    <property type="match status" value="2"/>
</dbReference>
<dbReference type="FunFam" id="3.40.1380.10:FF:000001">
    <property type="entry name" value="ATP synthase gamma chain"/>
    <property type="match status" value="1"/>
</dbReference>
<dbReference type="Gene3D" id="3.40.1380.10">
    <property type="match status" value="1"/>
</dbReference>
<dbReference type="Gene3D" id="1.10.287.80">
    <property type="entry name" value="ATP synthase, gamma subunit, helix hairpin domain"/>
    <property type="match status" value="1"/>
</dbReference>
<dbReference type="HAMAP" id="MF_00815">
    <property type="entry name" value="ATP_synth_gamma_bact"/>
    <property type="match status" value="1"/>
</dbReference>
<dbReference type="InterPro" id="IPR035968">
    <property type="entry name" value="ATP_synth_F1_ATPase_gsu"/>
</dbReference>
<dbReference type="InterPro" id="IPR000131">
    <property type="entry name" value="ATP_synth_F1_gsu"/>
</dbReference>
<dbReference type="InterPro" id="IPR023632">
    <property type="entry name" value="ATP_synth_F1_gsu_CS"/>
</dbReference>
<dbReference type="NCBIfam" id="TIGR01146">
    <property type="entry name" value="ATPsyn_F1gamma"/>
    <property type="match status" value="1"/>
</dbReference>
<dbReference type="NCBIfam" id="NF004144">
    <property type="entry name" value="PRK05621.1-1"/>
    <property type="match status" value="1"/>
</dbReference>
<dbReference type="PANTHER" id="PTHR11693">
    <property type="entry name" value="ATP SYNTHASE GAMMA CHAIN"/>
    <property type="match status" value="1"/>
</dbReference>
<dbReference type="PANTHER" id="PTHR11693:SF22">
    <property type="entry name" value="ATP SYNTHASE SUBUNIT GAMMA, MITOCHONDRIAL"/>
    <property type="match status" value="1"/>
</dbReference>
<dbReference type="Pfam" id="PF00231">
    <property type="entry name" value="ATP-synt"/>
    <property type="match status" value="1"/>
</dbReference>
<dbReference type="PRINTS" id="PR00126">
    <property type="entry name" value="ATPASEGAMMA"/>
</dbReference>
<dbReference type="SUPFAM" id="SSF52943">
    <property type="entry name" value="ATP synthase (F1-ATPase), gamma subunit"/>
    <property type="match status" value="1"/>
</dbReference>
<dbReference type="PROSITE" id="PS00153">
    <property type="entry name" value="ATPASE_GAMMA"/>
    <property type="match status" value="1"/>
</dbReference>